<comment type="function">
    <text evidence="1">Required for insertion of 4Fe-4S clusters for at least IspG.</text>
</comment>
<comment type="cofactor">
    <cofactor evidence="1">
        <name>iron-sulfur cluster</name>
        <dbReference type="ChEBI" id="CHEBI:30408"/>
    </cofactor>
    <text evidence="1">Binds 1 iron-sulfur cluster per subunit.</text>
</comment>
<comment type="subunit">
    <text evidence="1">Homodimer.</text>
</comment>
<comment type="similarity">
    <text evidence="1">Belongs to the HesB/IscA family.</text>
</comment>
<organism>
    <name type="scientific">Escherichia coli O17:K52:H18 (strain UMN026 / ExPEC)</name>
    <dbReference type="NCBI Taxonomy" id="585056"/>
    <lineage>
        <taxon>Bacteria</taxon>
        <taxon>Pseudomonadati</taxon>
        <taxon>Pseudomonadota</taxon>
        <taxon>Gammaproteobacteria</taxon>
        <taxon>Enterobacterales</taxon>
        <taxon>Enterobacteriaceae</taxon>
        <taxon>Escherichia</taxon>
    </lineage>
</organism>
<proteinExistence type="inferred from homology"/>
<evidence type="ECO:0000255" key="1">
    <source>
        <dbReference type="HAMAP-Rule" id="MF_01380"/>
    </source>
</evidence>
<dbReference type="EMBL" id="CU928163">
    <property type="protein sequence ID" value="CAR11375.1"/>
    <property type="molecule type" value="Genomic_DNA"/>
</dbReference>
<dbReference type="RefSeq" id="WP_001295564.1">
    <property type="nucleotide sequence ID" value="NC_011751.1"/>
</dbReference>
<dbReference type="RefSeq" id="YP_002410931.1">
    <property type="nucleotide sequence ID" value="NC_011751.1"/>
</dbReference>
<dbReference type="SMR" id="B7N825"/>
<dbReference type="STRING" id="585056.ECUMN_0154"/>
<dbReference type="GeneID" id="93777270"/>
<dbReference type="KEGG" id="eum:ECUMN_0154"/>
<dbReference type="PATRIC" id="fig|585056.7.peg.347"/>
<dbReference type="HOGENOM" id="CLU_069054_5_3_6"/>
<dbReference type="Proteomes" id="UP000007097">
    <property type="component" value="Chromosome"/>
</dbReference>
<dbReference type="GO" id="GO:0005829">
    <property type="term" value="C:cytosol"/>
    <property type="evidence" value="ECO:0007669"/>
    <property type="project" value="TreeGrafter"/>
</dbReference>
<dbReference type="GO" id="GO:0051537">
    <property type="term" value="F:2 iron, 2 sulfur cluster binding"/>
    <property type="evidence" value="ECO:0007669"/>
    <property type="project" value="UniProtKB-ARBA"/>
</dbReference>
<dbReference type="GO" id="GO:0051539">
    <property type="term" value="F:4 iron, 4 sulfur cluster binding"/>
    <property type="evidence" value="ECO:0007669"/>
    <property type="project" value="TreeGrafter"/>
</dbReference>
<dbReference type="GO" id="GO:0005506">
    <property type="term" value="F:iron ion binding"/>
    <property type="evidence" value="ECO:0007669"/>
    <property type="project" value="UniProtKB-UniRule"/>
</dbReference>
<dbReference type="GO" id="GO:0016226">
    <property type="term" value="P:iron-sulfur cluster assembly"/>
    <property type="evidence" value="ECO:0007669"/>
    <property type="project" value="UniProtKB-UniRule"/>
</dbReference>
<dbReference type="FunFam" id="2.60.300.12:FF:000002">
    <property type="entry name" value="Iron-sulfur cluster insertion protein ErpA"/>
    <property type="match status" value="1"/>
</dbReference>
<dbReference type="Gene3D" id="2.60.300.12">
    <property type="entry name" value="HesB-like domain"/>
    <property type="match status" value="1"/>
</dbReference>
<dbReference type="HAMAP" id="MF_01380">
    <property type="entry name" value="Fe_S_insert_ErpA"/>
    <property type="match status" value="1"/>
</dbReference>
<dbReference type="InterPro" id="IPR000361">
    <property type="entry name" value="FeS_biogenesis"/>
</dbReference>
<dbReference type="InterPro" id="IPR016092">
    <property type="entry name" value="FeS_cluster_insertion"/>
</dbReference>
<dbReference type="InterPro" id="IPR017870">
    <property type="entry name" value="FeS_cluster_insertion_CS"/>
</dbReference>
<dbReference type="InterPro" id="IPR023063">
    <property type="entry name" value="FeS_cluster_insertion_RrpA"/>
</dbReference>
<dbReference type="InterPro" id="IPR035903">
    <property type="entry name" value="HesB-like_dom_sf"/>
</dbReference>
<dbReference type="NCBIfam" id="TIGR00049">
    <property type="entry name" value="iron-sulfur cluster assembly accessory protein"/>
    <property type="match status" value="1"/>
</dbReference>
<dbReference type="NCBIfam" id="NF010147">
    <property type="entry name" value="PRK13623.1"/>
    <property type="match status" value="1"/>
</dbReference>
<dbReference type="PANTHER" id="PTHR43011">
    <property type="entry name" value="IRON-SULFUR CLUSTER ASSEMBLY 2 HOMOLOG, MITOCHONDRIAL"/>
    <property type="match status" value="1"/>
</dbReference>
<dbReference type="PANTHER" id="PTHR43011:SF1">
    <property type="entry name" value="IRON-SULFUR CLUSTER ASSEMBLY 2 HOMOLOG, MITOCHONDRIAL"/>
    <property type="match status" value="1"/>
</dbReference>
<dbReference type="Pfam" id="PF01521">
    <property type="entry name" value="Fe-S_biosyn"/>
    <property type="match status" value="1"/>
</dbReference>
<dbReference type="SUPFAM" id="SSF89360">
    <property type="entry name" value="HesB-like domain"/>
    <property type="match status" value="1"/>
</dbReference>
<dbReference type="PROSITE" id="PS01152">
    <property type="entry name" value="HESB"/>
    <property type="match status" value="1"/>
</dbReference>
<feature type="chain" id="PRO_1000144914" description="Iron-sulfur cluster insertion protein ErpA">
    <location>
        <begin position="1"/>
        <end position="114"/>
    </location>
</feature>
<feature type="binding site" evidence="1">
    <location>
        <position position="42"/>
    </location>
    <ligand>
        <name>iron-sulfur cluster</name>
        <dbReference type="ChEBI" id="CHEBI:30408"/>
    </ligand>
</feature>
<feature type="binding site" evidence="1">
    <location>
        <position position="106"/>
    </location>
    <ligand>
        <name>iron-sulfur cluster</name>
        <dbReference type="ChEBI" id="CHEBI:30408"/>
    </ligand>
</feature>
<feature type="binding site" evidence="1">
    <location>
        <position position="108"/>
    </location>
    <ligand>
        <name>iron-sulfur cluster</name>
        <dbReference type="ChEBI" id="CHEBI:30408"/>
    </ligand>
</feature>
<reference key="1">
    <citation type="journal article" date="2009" name="PLoS Genet.">
        <title>Organised genome dynamics in the Escherichia coli species results in highly diverse adaptive paths.</title>
        <authorList>
            <person name="Touchon M."/>
            <person name="Hoede C."/>
            <person name="Tenaillon O."/>
            <person name="Barbe V."/>
            <person name="Baeriswyl S."/>
            <person name="Bidet P."/>
            <person name="Bingen E."/>
            <person name="Bonacorsi S."/>
            <person name="Bouchier C."/>
            <person name="Bouvet O."/>
            <person name="Calteau A."/>
            <person name="Chiapello H."/>
            <person name="Clermont O."/>
            <person name="Cruveiller S."/>
            <person name="Danchin A."/>
            <person name="Diard M."/>
            <person name="Dossat C."/>
            <person name="Karoui M.E."/>
            <person name="Frapy E."/>
            <person name="Garry L."/>
            <person name="Ghigo J.M."/>
            <person name="Gilles A.M."/>
            <person name="Johnson J."/>
            <person name="Le Bouguenec C."/>
            <person name="Lescat M."/>
            <person name="Mangenot S."/>
            <person name="Martinez-Jehanne V."/>
            <person name="Matic I."/>
            <person name="Nassif X."/>
            <person name="Oztas S."/>
            <person name="Petit M.A."/>
            <person name="Pichon C."/>
            <person name="Rouy Z."/>
            <person name="Ruf C.S."/>
            <person name="Schneider D."/>
            <person name="Tourret J."/>
            <person name="Vacherie B."/>
            <person name="Vallenet D."/>
            <person name="Medigue C."/>
            <person name="Rocha E.P.C."/>
            <person name="Denamur E."/>
        </authorList>
    </citation>
    <scope>NUCLEOTIDE SEQUENCE [LARGE SCALE GENOMIC DNA]</scope>
    <source>
        <strain>UMN026 / ExPEC</strain>
    </source>
</reference>
<name>ERPA_ECOLU</name>
<gene>
    <name evidence="1" type="primary">erpA</name>
    <name type="ordered locus">ECUMN_0154</name>
</gene>
<keyword id="KW-0408">Iron</keyword>
<keyword id="KW-0411">Iron-sulfur</keyword>
<keyword id="KW-0479">Metal-binding</keyword>
<sequence>MSDDVALPLEFTDAAANKVKSLIADEDNPNLKLRVYITGGGCSGFQYGFTFDDQVNEGDMTIEKQGVGLVVDPMSLQYLVGGSVDYTEGLEGSRFIVTNPNAKSTCGCGSSFSI</sequence>
<protein>
    <recommendedName>
        <fullName evidence="1">Iron-sulfur cluster insertion protein ErpA</fullName>
    </recommendedName>
</protein>
<accession>B7N825</accession>